<reference key="1">
    <citation type="journal article" date="2009" name="PLoS Biol.">
        <title>Lineage-specific biology revealed by a finished genome assembly of the mouse.</title>
        <authorList>
            <person name="Church D.M."/>
            <person name="Goodstadt L."/>
            <person name="Hillier L.W."/>
            <person name="Zody M.C."/>
            <person name="Goldstein S."/>
            <person name="She X."/>
            <person name="Bult C.J."/>
            <person name="Agarwala R."/>
            <person name="Cherry J.L."/>
            <person name="DiCuccio M."/>
            <person name="Hlavina W."/>
            <person name="Kapustin Y."/>
            <person name="Meric P."/>
            <person name="Maglott D."/>
            <person name="Birtle Z."/>
            <person name="Marques A.C."/>
            <person name="Graves T."/>
            <person name="Zhou S."/>
            <person name="Teague B."/>
            <person name="Potamousis K."/>
            <person name="Churas C."/>
            <person name="Place M."/>
            <person name="Herschleb J."/>
            <person name="Runnheim R."/>
            <person name="Forrest D."/>
            <person name="Amos-Landgraf J."/>
            <person name="Schwartz D.C."/>
            <person name="Cheng Z."/>
            <person name="Lindblad-Toh K."/>
            <person name="Eichler E.E."/>
            <person name="Ponting C.P."/>
        </authorList>
    </citation>
    <scope>NUCLEOTIDE SEQUENCE [LARGE SCALE GENOMIC DNA]</scope>
    <source>
        <strain>C57BL/6J</strain>
    </source>
</reference>
<reference key="2">
    <citation type="journal article" date="2004" name="Genome Res.">
        <title>The status, quality, and expansion of the NIH full-length cDNA project: the Mammalian Gene Collection (MGC).</title>
        <authorList>
            <consortium name="The MGC Project Team"/>
        </authorList>
    </citation>
    <scope>NUCLEOTIDE SEQUENCE [LARGE SCALE MRNA]</scope>
</reference>
<reference evidence="3 4" key="3">
    <citation type="journal article" date="2003" name="Mol. Biol. Evol.">
        <title>Adaptive diversification of bitter taste receptor genes in mammalian evolution.</title>
        <authorList>
            <person name="Shi P."/>
            <person name="Zhang J."/>
            <person name="Yang H."/>
            <person name="Zhang Y.-P."/>
        </authorList>
    </citation>
    <scope>IDENTIFICATION</scope>
</reference>
<organism>
    <name type="scientific">Mus musculus</name>
    <name type="common">Mouse</name>
    <dbReference type="NCBI Taxonomy" id="10090"/>
    <lineage>
        <taxon>Eukaryota</taxon>
        <taxon>Metazoa</taxon>
        <taxon>Chordata</taxon>
        <taxon>Craniata</taxon>
        <taxon>Vertebrata</taxon>
        <taxon>Euteleostomi</taxon>
        <taxon>Mammalia</taxon>
        <taxon>Eutheria</taxon>
        <taxon>Euarchontoglires</taxon>
        <taxon>Glires</taxon>
        <taxon>Rodentia</taxon>
        <taxon>Myomorpha</taxon>
        <taxon>Muroidea</taxon>
        <taxon>Muridae</taxon>
        <taxon>Murinae</taxon>
        <taxon>Mus</taxon>
        <taxon>Mus</taxon>
    </lineage>
</organism>
<gene>
    <name evidence="5" type="primary">Tas2r104</name>
    <name evidence="2" type="synonym">T2r45</name>
</gene>
<feature type="chain" id="PRO_0000248248" description="Taste receptor type 2 member 104">
    <location>
        <begin position="1"/>
        <end position="302"/>
    </location>
</feature>
<feature type="topological domain" description="Extracellular" evidence="1">
    <location>
        <begin position="1"/>
        <end position="7"/>
    </location>
</feature>
<feature type="transmembrane region" description="Helical; Name=1" evidence="1">
    <location>
        <begin position="8"/>
        <end position="28"/>
    </location>
</feature>
<feature type="topological domain" description="Cytoplasmic" evidence="1">
    <location>
        <begin position="29"/>
        <end position="43"/>
    </location>
</feature>
<feature type="transmembrane region" description="Helical; Name=2" evidence="1">
    <location>
        <begin position="44"/>
        <end position="64"/>
    </location>
</feature>
<feature type="topological domain" description="Extracellular" evidence="1">
    <location>
        <begin position="65"/>
        <end position="87"/>
    </location>
</feature>
<feature type="transmembrane region" description="Helical; Name=3" evidence="1">
    <location>
        <begin position="88"/>
        <end position="108"/>
    </location>
</feature>
<feature type="topological domain" description="Cytoplasmic" evidence="1">
    <location>
        <begin position="109"/>
        <end position="128"/>
    </location>
</feature>
<feature type="transmembrane region" description="Helical; Name=4" evidence="1">
    <location>
        <begin position="129"/>
        <end position="149"/>
    </location>
</feature>
<feature type="topological domain" description="Extracellular" evidence="1">
    <location>
        <begin position="150"/>
        <end position="182"/>
    </location>
</feature>
<feature type="transmembrane region" description="Helical; Name=5" evidence="1">
    <location>
        <begin position="183"/>
        <end position="203"/>
    </location>
</feature>
<feature type="topological domain" description="Cytoplasmic" evidence="1">
    <location>
        <begin position="204"/>
        <end position="229"/>
    </location>
</feature>
<feature type="transmembrane region" description="Helical; Name=6" evidence="1">
    <location>
        <begin position="230"/>
        <end position="250"/>
    </location>
</feature>
<feature type="topological domain" description="Extracellular" evidence="1">
    <location>
        <begin position="251"/>
        <end position="259"/>
    </location>
</feature>
<feature type="transmembrane region" description="Helical; Name=7" evidence="1">
    <location>
        <begin position="260"/>
        <end position="280"/>
    </location>
</feature>
<feature type="topological domain" description="Cytoplasmic" evidence="1">
    <location>
        <begin position="281"/>
        <end position="302"/>
    </location>
</feature>
<feature type="glycosylation site" description="N-linked (GlcNAc...) asparagine" evidence="1">
    <location>
        <position position="161"/>
    </location>
</feature>
<protein>
    <recommendedName>
        <fullName>Taste receptor type 2 member 104</fullName>
        <shortName>T2R104</shortName>
        <shortName>mT2R45</shortName>
    </recommendedName>
</protein>
<evidence type="ECO:0000255" key="1"/>
<evidence type="ECO:0000303" key="2">
    <source>
    </source>
</evidence>
<evidence type="ECO:0000305" key="3"/>
<evidence type="ECO:0000312" key="4">
    <source>
        <dbReference type="EMBL" id="DAA01213.1"/>
    </source>
</evidence>
<evidence type="ECO:0000312" key="5">
    <source>
        <dbReference type="MGI" id="MGI:2681185"/>
    </source>
</evidence>
<dbReference type="EMBL" id="AC140204">
    <property type="status" value="NOT_ANNOTATED_CDS"/>
    <property type="molecule type" value="Genomic_DNA"/>
</dbReference>
<dbReference type="EMBL" id="BC148229">
    <property type="protein sequence ID" value="AAI48230.1"/>
    <property type="molecule type" value="mRNA"/>
</dbReference>
<dbReference type="EMBL" id="BK001074">
    <property type="protein sequence ID" value="DAA01213.1"/>
    <property type="molecule type" value="Genomic_DNA"/>
</dbReference>
<dbReference type="CCDS" id="CCDS20611.1"/>
<dbReference type="RefSeq" id="NP_996894.1">
    <property type="nucleotide sequence ID" value="NM_207011.1"/>
</dbReference>
<dbReference type="SMR" id="Q7M723"/>
<dbReference type="FunCoup" id="Q7M723">
    <property type="interactions" value="88"/>
</dbReference>
<dbReference type="STRING" id="10090.ENSMUSP00000072237"/>
<dbReference type="GlyCosmos" id="Q7M723">
    <property type="glycosylation" value="1 site, No reported glycans"/>
</dbReference>
<dbReference type="GlyGen" id="Q7M723">
    <property type="glycosylation" value="1 site"/>
</dbReference>
<dbReference type="PaxDb" id="10090-ENSMUSP00000072237"/>
<dbReference type="DNASU" id="387340"/>
<dbReference type="Ensembl" id="ENSMUST00000072404.3">
    <property type="protein sequence ID" value="ENSMUSP00000072237.3"/>
    <property type="gene ID" value="ENSMUSG00000061977.3"/>
</dbReference>
<dbReference type="GeneID" id="387340"/>
<dbReference type="KEGG" id="mmu:387340"/>
<dbReference type="UCSC" id="uc009eiy.1">
    <property type="organism name" value="mouse"/>
</dbReference>
<dbReference type="AGR" id="MGI:2681185"/>
<dbReference type="CTD" id="387340"/>
<dbReference type="MGI" id="MGI:2681185">
    <property type="gene designation" value="Tas2r104"/>
</dbReference>
<dbReference type="VEuPathDB" id="HostDB:ENSMUSG00000061977"/>
<dbReference type="eggNOG" id="ENOG502T3AX">
    <property type="taxonomic scope" value="Eukaryota"/>
</dbReference>
<dbReference type="GeneTree" id="ENSGT01100000263477"/>
<dbReference type="HOGENOM" id="CLU_072337_3_0_1"/>
<dbReference type="InParanoid" id="Q7M723"/>
<dbReference type="OMA" id="IANYSHC"/>
<dbReference type="OrthoDB" id="8876749at2759"/>
<dbReference type="PhylomeDB" id="Q7M723"/>
<dbReference type="TreeFam" id="TF335891"/>
<dbReference type="BioGRID-ORCS" id="387340">
    <property type="hits" value="3 hits in 77 CRISPR screens"/>
</dbReference>
<dbReference type="PRO" id="PR:Q7M723"/>
<dbReference type="Proteomes" id="UP000000589">
    <property type="component" value="Chromosome 6"/>
</dbReference>
<dbReference type="RNAct" id="Q7M723">
    <property type="molecule type" value="protein"/>
</dbReference>
<dbReference type="GO" id="GO:0016020">
    <property type="term" value="C:membrane"/>
    <property type="evidence" value="ECO:0007669"/>
    <property type="project" value="UniProtKB-SubCell"/>
</dbReference>
<dbReference type="GO" id="GO:0033038">
    <property type="term" value="F:bitter taste receptor activity"/>
    <property type="evidence" value="ECO:0007669"/>
    <property type="project" value="InterPro"/>
</dbReference>
<dbReference type="GO" id="GO:0004930">
    <property type="term" value="F:G protein-coupled receptor activity"/>
    <property type="evidence" value="ECO:0007669"/>
    <property type="project" value="UniProtKB-KW"/>
</dbReference>
<dbReference type="CDD" id="cd15021">
    <property type="entry name" value="7tm_TAS2R10"/>
    <property type="match status" value="1"/>
</dbReference>
<dbReference type="FunFam" id="1.20.1070.10:FF:000042">
    <property type="entry name" value="Taste receptor type 2 member 7"/>
    <property type="match status" value="1"/>
</dbReference>
<dbReference type="Gene3D" id="1.20.1070.10">
    <property type="entry name" value="Rhodopsin 7-helix transmembrane proteins"/>
    <property type="match status" value="1"/>
</dbReference>
<dbReference type="InterPro" id="IPR017452">
    <property type="entry name" value="GPCR_Rhodpsn_7TM"/>
</dbReference>
<dbReference type="InterPro" id="IPR007960">
    <property type="entry name" value="TAS2R"/>
</dbReference>
<dbReference type="PANTHER" id="PTHR11394">
    <property type="entry name" value="TASTE RECEPTOR TYPE 2"/>
    <property type="match status" value="1"/>
</dbReference>
<dbReference type="PANTHER" id="PTHR11394:SF30">
    <property type="entry name" value="TASTE RECEPTOR TYPE 2 MEMBER 104"/>
    <property type="match status" value="1"/>
</dbReference>
<dbReference type="Pfam" id="PF05296">
    <property type="entry name" value="TAS2R"/>
    <property type="match status" value="1"/>
</dbReference>
<dbReference type="SUPFAM" id="SSF81321">
    <property type="entry name" value="Family A G protein-coupled receptor-like"/>
    <property type="match status" value="1"/>
</dbReference>
<dbReference type="PROSITE" id="PS50262">
    <property type="entry name" value="G_PROTEIN_RECEP_F1_2"/>
    <property type="match status" value="1"/>
</dbReference>
<comment type="function">
    <text evidence="3">Putative taste receptor which may play a role in the perception of bitterness.</text>
</comment>
<comment type="subcellular location">
    <subcellularLocation>
        <location evidence="3">Membrane</location>
        <topology evidence="3">Multi-pass membrane protein</topology>
    </subcellularLocation>
</comment>
<comment type="miscellaneous">
    <text evidence="3">Several bitter taste receptors are expressed in a single taste receptor cell.</text>
</comment>
<comment type="similarity">
    <text evidence="1">Belongs to the G-protein coupled receptor T2R family.</text>
</comment>
<sequence>MLSALESILLSVATSEAMLGVLGNTFIVLVNYTDWVRNKKLSKINFILTGLAISRIFTIWIITLDAYTKVFLLTMLMPSSLHECMSYIWVIINHLSVWFSTSLGIFYFLKIANFSHYIFLWMKRRADKVFVFLIVFLIITWLASFPLAVKVIKDVKIYQSNTSWLIHLEKSELLINYVFANMGPISLFIVAIIACFLLTISLWRHSRQMQSIGSGFRDLNTEAHMKAMKVLIAFIILFILYFLGILIETLCLFLTNNKLLFIFGFTLSAMYPCCHSFILILTSRELKQATMRALQRLKCCET</sequence>
<accession>Q7M723</accession>
<accession>A7MAX0</accession>
<keyword id="KW-0297">G-protein coupled receptor</keyword>
<keyword id="KW-0325">Glycoprotein</keyword>
<keyword id="KW-0472">Membrane</keyword>
<keyword id="KW-0675">Receptor</keyword>
<keyword id="KW-1185">Reference proteome</keyword>
<keyword id="KW-0716">Sensory transduction</keyword>
<keyword id="KW-0919">Taste</keyword>
<keyword id="KW-0807">Transducer</keyword>
<keyword id="KW-0812">Transmembrane</keyword>
<keyword id="KW-1133">Transmembrane helix</keyword>
<proteinExistence type="evidence at transcript level"/>
<name>TR104_MOUSE</name>